<gene>
    <name evidence="2" type="primary">ccoP</name>
    <name evidence="10" type="synonym">cytP</name>
</gene>
<evidence type="ECO:0000250" key="1">
    <source>
        <dbReference type="UniProtKB" id="D5ARP7"/>
    </source>
</evidence>
<evidence type="ECO:0000250" key="2">
    <source>
        <dbReference type="UniProtKB" id="D9IA45"/>
    </source>
</evidence>
<evidence type="ECO:0000250" key="3">
    <source>
        <dbReference type="UniProtKB" id="Q3J015"/>
    </source>
</evidence>
<evidence type="ECO:0000250" key="4">
    <source>
        <dbReference type="UniProtKB" id="Q52689"/>
    </source>
</evidence>
<evidence type="ECO:0000250" key="5">
    <source>
        <dbReference type="UniProtKB" id="Q8KS19"/>
    </source>
</evidence>
<evidence type="ECO:0000255" key="6"/>
<evidence type="ECO:0000255" key="7">
    <source>
        <dbReference type="PROSITE-ProRule" id="PRU00433"/>
    </source>
</evidence>
<evidence type="ECO:0000269" key="8">
    <source>
    </source>
</evidence>
<evidence type="ECO:0000305" key="9"/>
<evidence type="ECO:0000312" key="10">
    <source>
        <dbReference type="EMBL" id="AAC72074.1"/>
    </source>
</evidence>
<name>CCOP_AZOBR</name>
<organism>
    <name type="scientific">Azospirillum brasilense</name>
    <dbReference type="NCBI Taxonomy" id="192"/>
    <lineage>
        <taxon>Bacteria</taxon>
        <taxon>Pseudomonadati</taxon>
        <taxon>Pseudomonadota</taxon>
        <taxon>Alphaproteobacteria</taxon>
        <taxon>Rhodospirillales</taxon>
        <taxon>Azospirillaceae</taxon>
        <taxon>Azospirillum</taxon>
    </lineage>
</organism>
<accession>Q9ZHR4</accession>
<reference evidence="9 10" key="1">
    <citation type="journal article" date="1998" name="J. Bacteriol.">
        <title>A cytochrome cbb3 (cytochrome c) terminal oxidase in Azospirillum brasilense Sp7 supports microaerobic growth.</title>
        <authorList>
            <person name="Marchal K."/>
            <person name="Sun J."/>
            <person name="Keijers V."/>
            <person name="Haaker H."/>
            <person name="Vanderleyden J."/>
        </authorList>
    </citation>
    <scope>NUCLEOTIDE SEQUENCE [GENOMIC DNA]</scope>
    <scope>COFACTOR</scope>
    <source>
        <strain evidence="10">ATCC 29145 / DSM 1690 / IMET 11303 / Sp7</strain>
    </source>
</reference>
<sequence>MAQKEKDALSGVETTGHEWDGLRELNNPLPKWWLYIFYVCIAWSLVYYVLYPAWPLGKSYTKGLLGYSQREELVQKVADGKKAQEKYLTAIAATSVEDIQKNKDLLAFAMAGGRSYFNENCAACHGAGGQGAKGFPTLADDVWLWGGTTADIYKTIQHGIRADDGDTRGTVGIGMTAFGRDGILNRDQIGQVAEYILSLNKRSTDAAAAEKGKTVYDENCAACHGENAQGSLAVGMEVGAPPLVTGNWLYGGDKATLVQTITNGRAGVMPAWSKRLDDATIKSLAVYVHNLGGGK</sequence>
<comment type="function">
    <text evidence="1 2 3">C-type cytochrome. Part of the cbb3-type cytochrome c oxidase complex. CcoP subunit is required for transferring electrons from donor cytochrome c via its heme groups to CcoO subunit. From there, electrons are shuttled to the catalytic binuclear center of CcoN subunit where oxygen reduction takes place. The complex also functions as a proton pump (By similarity).</text>
</comment>
<comment type="cofactor">
    <cofactor evidence="2 8">
        <name>heme c</name>
        <dbReference type="ChEBI" id="CHEBI:61717"/>
    </cofactor>
    <text evidence="2 8">Binds 2 heme C groups per subunit.</text>
</comment>
<comment type="pathway">
    <text evidence="1">Energy metabolism; oxidative phosphorylation.</text>
</comment>
<comment type="subunit">
    <text evidence="1">Component of the cbb3-type cytochrome c oxidase at least composed of CcoN, CcoO, CcoQ and CcoP.</text>
</comment>
<comment type="subcellular location">
    <subcellularLocation>
        <location evidence="5 6">Cell inner membrane</location>
        <topology evidence="5 6">Single-pass membrane protein</topology>
    </subcellularLocation>
</comment>
<comment type="similarity">
    <text evidence="9">Belongs to the CcoP / FixP family.</text>
</comment>
<proteinExistence type="inferred from homology"/>
<keyword id="KW-0997">Cell inner membrane</keyword>
<keyword id="KW-1003">Cell membrane</keyword>
<keyword id="KW-0249">Electron transport</keyword>
<keyword id="KW-0349">Heme</keyword>
<keyword id="KW-0375">Hydrogen ion transport</keyword>
<keyword id="KW-0406">Ion transport</keyword>
<keyword id="KW-0408">Iron</keyword>
<keyword id="KW-0472">Membrane</keyword>
<keyword id="KW-0479">Metal-binding</keyword>
<keyword id="KW-0560">Oxidoreductase</keyword>
<keyword id="KW-0677">Repeat</keyword>
<keyword id="KW-0679">Respiratory chain</keyword>
<keyword id="KW-0812">Transmembrane</keyword>
<keyword id="KW-1133">Transmembrane helix</keyword>
<keyword id="KW-0813">Transport</keyword>
<dbReference type="EMBL" id="AF054871">
    <property type="protein sequence ID" value="AAC72074.1"/>
    <property type="molecule type" value="Genomic_DNA"/>
</dbReference>
<dbReference type="SMR" id="Q9ZHR4"/>
<dbReference type="UniPathway" id="UPA00705"/>
<dbReference type="GO" id="GO:0005886">
    <property type="term" value="C:plasma membrane"/>
    <property type="evidence" value="ECO:0007669"/>
    <property type="project" value="UniProtKB-SubCell"/>
</dbReference>
<dbReference type="GO" id="GO:0009055">
    <property type="term" value="F:electron transfer activity"/>
    <property type="evidence" value="ECO:0007669"/>
    <property type="project" value="InterPro"/>
</dbReference>
<dbReference type="GO" id="GO:0020037">
    <property type="term" value="F:heme binding"/>
    <property type="evidence" value="ECO:0007669"/>
    <property type="project" value="InterPro"/>
</dbReference>
<dbReference type="GO" id="GO:0005506">
    <property type="term" value="F:iron ion binding"/>
    <property type="evidence" value="ECO:0007669"/>
    <property type="project" value="InterPro"/>
</dbReference>
<dbReference type="GO" id="GO:0016491">
    <property type="term" value="F:oxidoreductase activity"/>
    <property type="evidence" value="ECO:0007669"/>
    <property type="project" value="UniProtKB-KW"/>
</dbReference>
<dbReference type="GO" id="GO:0006119">
    <property type="term" value="P:oxidative phosphorylation"/>
    <property type="evidence" value="ECO:0007669"/>
    <property type="project" value="UniProtKB-UniPathway"/>
</dbReference>
<dbReference type="GO" id="GO:1902600">
    <property type="term" value="P:proton transmembrane transport"/>
    <property type="evidence" value="ECO:0007669"/>
    <property type="project" value="UniProtKB-KW"/>
</dbReference>
<dbReference type="Gene3D" id="6.10.280.130">
    <property type="match status" value="1"/>
</dbReference>
<dbReference type="Gene3D" id="1.10.760.10">
    <property type="entry name" value="Cytochrome c-like domain"/>
    <property type="match status" value="2"/>
</dbReference>
<dbReference type="InterPro" id="IPR032858">
    <property type="entry name" value="CcoP_N"/>
</dbReference>
<dbReference type="InterPro" id="IPR038414">
    <property type="entry name" value="CcoP_N_sf"/>
</dbReference>
<dbReference type="InterPro" id="IPR009056">
    <property type="entry name" value="Cyt_c-like_dom"/>
</dbReference>
<dbReference type="InterPro" id="IPR036909">
    <property type="entry name" value="Cyt_c-like_dom_sf"/>
</dbReference>
<dbReference type="InterPro" id="IPR008168">
    <property type="entry name" value="Cyt_C_IC"/>
</dbReference>
<dbReference type="InterPro" id="IPR004678">
    <property type="entry name" value="Cyt_c_oxidase_cbb3_su3"/>
</dbReference>
<dbReference type="InterPro" id="IPR050597">
    <property type="entry name" value="Cytochrome_c_Oxidase_Subunit"/>
</dbReference>
<dbReference type="NCBIfam" id="TIGR00782">
    <property type="entry name" value="ccoP"/>
    <property type="match status" value="1"/>
</dbReference>
<dbReference type="PANTHER" id="PTHR33751">
    <property type="entry name" value="CBB3-TYPE CYTOCHROME C OXIDASE SUBUNIT FIXP"/>
    <property type="match status" value="1"/>
</dbReference>
<dbReference type="PANTHER" id="PTHR33751:SF1">
    <property type="entry name" value="CBB3-TYPE CYTOCHROME C OXIDASE SUBUNIT FIXP"/>
    <property type="match status" value="1"/>
</dbReference>
<dbReference type="Pfam" id="PF00034">
    <property type="entry name" value="Cytochrom_C"/>
    <property type="match status" value="1"/>
</dbReference>
<dbReference type="Pfam" id="PF13442">
    <property type="entry name" value="Cytochrome_CBB3"/>
    <property type="match status" value="1"/>
</dbReference>
<dbReference type="Pfam" id="PF14715">
    <property type="entry name" value="FixP_N"/>
    <property type="match status" value="1"/>
</dbReference>
<dbReference type="PIRSF" id="PIRSF000006">
    <property type="entry name" value="Cbb3-Cox_fixP"/>
    <property type="match status" value="1"/>
</dbReference>
<dbReference type="PRINTS" id="PR00605">
    <property type="entry name" value="CYTCHROMECIC"/>
</dbReference>
<dbReference type="SUPFAM" id="SSF46626">
    <property type="entry name" value="Cytochrome c"/>
    <property type="match status" value="2"/>
</dbReference>
<dbReference type="PROSITE" id="PS51007">
    <property type="entry name" value="CYTC"/>
    <property type="match status" value="2"/>
</dbReference>
<protein>
    <recommendedName>
        <fullName evidence="1 10">Cbb3-type cytochrome c oxidase subunit CcoP</fullName>
        <shortName evidence="1">Cbb3-Cox subunit CcoP</shortName>
    </recommendedName>
    <alternativeName>
        <fullName evidence="4">C-type cytochrome CcoP</fullName>
        <shortName evidence="1">Cyt c(P)</shortName>
    </alternativeName>
    <alternativeName>
        <fullName evidence="1">Cytochrome c oxidase subunit III</fullName>
    </alternativeName>
</protein>
<feature type="chain" id="PRO_0000412282" description="Cbb3-type cytochrome c oxidase subunit CcoP">
    <location>
        <begin position="1"/>
        <end position="295"/>
    </location>
</feature>
<feature type="topological domain" description="Cytoplasmic" evidence="3 6">
    <location>
        <begin position="1"/>
        <end position="31"/>
    </location>
</feature>
<feature type="transmembrane region" description="Helical" evidence="6">
    <location>
        <begin position="32"/>
        <end position="52"/>
    </location>
</feature>
<feature type="topological domain" description="Periplasmic" evidence="3 6">
    <location>
        <begin position="53"/>
        <end position="295"/>
    </location>
</feature>
<feature type="domain" description="Cytochrome c 1" evidence="7">
    <location>
        <begin position="108"/>
        <end position="200"/>
    </location>
</feature>
<feature type="domain" description="Cytochrome c 2" evidence="7">
    <location>
        <begin position="207"/>
        <end position="292"/>
    </location>
</feature>
<feature type="binding site" description="covalent" evidence="2">
    <location>
        <position position="121"/>
    </location>
    <ligand>
        <name>heme c</name>
        <dbReference type="ChEBI" id="CHEBI:61717"/>
        <label>1</label>
    </ligand>
</feature>
<feature type="binding site" description="covalent" evidence="2">
    <location>
        <position position="124"/>
    </location>
    <ligand>
        <name>heme c</name>
        <dbReference type="ChEBI" id="CHEBI:61717"/>
        <label>1</label>
    </ligand>
</feature>
<feature type="binding site" description="axial binding residue" evidence="2">
    <location>
        <position position="125"/>
    </location>
    <ligand>
        <name>heme c</name>
        <dbReference type="ChEBI" id="CHEBI:61717"/>
        <label>1</label>
    </ligand>
    <ligandPart>
        <name>Fe</name>
        <dbReference type="ChEBI" id="CHEBI:18248"/>
    </ligandPart>
</feature>
<feature type="binding site" description="axial binding residue" evidence="2">
    <location>
        <position position="175"/>
    </location>
    <ligand>
        <name>heme c</name>
        <dbReference type="ChEBI" id="CHEBI:61717"/>
        <label>2</label>
    </ligand>
    <ligandPart>
        <name>Fe</name>
        <dbReference type="ChEBI" id="CHEBI:18248"/>
    </ligandPart>
</feature>
<feature type="binding site" description="covalent" evidence="2">
    <location>
        <position position="220"/>
    </location>
    <ligand>
        <name>heme c</name>
        <dbReference type="ChEBI" id="CHEBI:61717"/>
        <label>2</label>
    </ligand>
</feature>
<feature type="binding site" description="covalent" evidence="2">
    <location>
        <position position="223"/>
    </location>
    <ligand>
        <name>heme c</name>
        <dbReference type="ChEBI" id="CHEBI:61717"/>
        <label>2</label>
    </ligand>
</feature>
<feature type="binding site" description="axial binding residue" evidence="2">
    <location>
        <position position="224"/>
    </location>
    <ligand>
        <name>heme c</name>
        <dbReference type="ChEBI" id="CHEBI:61717"/>
        <label>2</label>
    </ligand>
    <ligandPart>
        <name>Fe</name>
        <dbReference type="ChEBI" id="CHEBI:18248"/>
    </ligandPart>
</feature>
<feature type="binding site" description="axial binding residue" evidence="2">
    <location>
        <position position="269"/>
    </location>
    <ligand>
        <name>heme c</name>
        <dbReference type="ChEBI" id="CHEBI:61717"/>
        <label>1</label>
    </ligand>
    <ligandPart>
        <name>Fe</name>
        <dbReference type="ChEBI" id="CHEBI:18248"/>
    </ligandPart>
</feature>